<dbReference type="EC" id="3.4.23.18" evidence="1"/>
<dbReference type="EMBL" id="EQ963480">
    <property type="protein sequence ID" value="EED49364.1"/>
    <property type="molecule type" value="Genomic_DNA"/>
</dbReference>
<dbReference type="RefSeq" id="XP_002381265.1">
    <property type="nucleotide sequence ID" value="XM_002381224.1"/>
</dbReference>
<dbReference type="SMR" id="B8NLY9"/>
<dbReference type="STRING" id="332952.B8NLY9"/>
<dbReference type="MEROPS" id="A01.026"/>
<dbReference type="GlyCosmos" id="B8NLY9">
    <property type="glycosylation" value="1 site, No reported glycans"/>
</dbReference>
<dbReference type="EnsemblFungi" id="EED49364">
    <property type="protein sequence ID" value="EED49364"/>
    <property type="gene ID" value="AFLA_094450"/>
</dbReference>
<dbReference type="VEuPathDB" id="FungiDB:AFLA_009680"/>
<dbReference type="eggNOG" id="KOG1339">
    <property type="taxonomic scope" value="Eukaryota"/>
</dbReference>
<dbReference type="HOGENOM" id="CLU_013253_0_1_1"/>
<dbReference type="OMA" id="NRLGWAP"/>
<dbReference type="GO" id="GO:0005576">
    <property type="term" value="C:extracellular region"/>
    <property type="evidence" value="ECO:0007669"/>
    <property type="project" value="UniProtKB-SubCell"/>
</dbReference>
<dbReference type="GO" id="GO:0004190">
    <property type="term" value="F:aspartic-type endopeptidase activity"/>
    <property type="evidence" value="ECO:0007669"/>
    <property type="project" value="UniProtKB-KW"/>
</dbReference>
<dbReference type="GO" id="GO:0006508">
    <property type="term" value="P:proteolysis"/>
    <property type="evidence" value="ECO:0007669"/>
    <property type="project" value="UniProtKB-KW"/>
</dbReference>
<dbReference type="CDD" id="cd06097">
    <property type="entry name" value="Aspergillopepsin_like"/>
    <property type="match status" value="1"/>
</dbReference>
<dbReference type="FunFam" id="2.40.70.10:FF:000024">
    <property type="entry name" value="Endothiapepsin"/>
    <property type="match status" value="1"/>
</dbReference>
<dbReference type="FunFam" id="2.40.70.10:FF:000026">
    <property type="entry name" value="Endothiapepsin"/>
    <property type="match status" value="1"/>
</dbReference>
<dbReference type="Gene3D" id="2.40.70.10">
    <property type="entry name" value="Acid Proteases"/>
    <property type="match status" value="2"/>
</dbReference>
<dbReference type="InterPro" id="IPR001461">
    <property type="entry name" value="Aspartic_peptidase_A1"/>
</dbReference>
<dbReference type="InterPro" id="IPR001969">
    <property type="entry name" value="Aspartic_peptidase_AS"/>
</dbReference>
<dbReference type="InterPro" id="IPR034163">
    <property type="entry name" value="Aspergillopepsin-like_cat_dom"/>
</dbReference>
<dbReference type="InterPro" id="IPR033121">
    <property type="entry name" value="PEPTIDASE_A1"/>
</dbReference>
<dbReference type="InterPro" id="IPR021109">
    <property type="entry name" value="Peptidase_aspartic_dom_sf"/>
</dbReference>
<dbReference type="PANTHER" id="PTHR47966:SF2">
    <property type="entry name" value="ASPERGILLOPEPSIN-1-RELATED"/>
    <property type="match status" value="1"/>
</dbReference>
<dbReference type="PANTHER" id="PTHR47966">
    <property type="entry name" value="BETA-SITE APP-CLEAVING ENZYME, ISOFORM A-RELATED"/>
    <property type="match status" value="1"/>
</dbReference>
<dbReference type="Pfam" id="PF00026">
    <property type="entry name" value="Asp"/>
    <property type="match status" value="1"/>
</dbReference>
<dbReference type="PRINTS" id="PR00792">
    <property type="entry name" value="PEPSIN"/>
</dbReference>
<dbReference type="SUPFAM" id="SSF50630">
    <property type="entry name" value="Acid proteases"/>
    <property type="match status" value="1"/>
</dbReference>
<dbReference type="PROSITE" id="PS00141">
    <property type="entry name" value="ASP_PROTEASE"/>
    <property type="match status" value="2"/>
</dbReference>
<dbReference type="PROSITE" id="PS51767">
    <property type="entry name" value="PEPTIDASE_A1"/>
    <property type="match status" value="1"/>
</dbReference>
<evidence type="ECO:0000250" key="1">
    <source>
        <dbReference type="UniProtKB" id="Q12567"/>
    </source>
</evidence>
<evidence type="ECO:0000255" key="2"/>
<evidence type="ECO:0000255" key="3">
    <source>
        <dbReference type="PROSITE-ProRule" id="PRU00498"/>
    </source>
</evidence>
<evidence type="ECO:0000255" key="4">
    <source>
        <dbReference type="PROSITE-ProRule" id="PRU01103"/>
    </source>
</evidence>
<evidence type="ECO:0000305" key="5"/>
<accession>B8NLY9</accession>
<name>PEPA_ASPFN</name>
<keyword id="KW-0064">Aspartyl protease</keyword>
<keyword id="KW-1015">Disulfide bond</keyword>
<keyword id="KW-0325">Glycoprotein</keyword>
<keyword id="KW-0378">Hydrolase</keyword>
<keyword id="KW-0645">Protease</keyword>
<keyword id="KW-0964">Secreted</keyword>
<keyword id="KW-0732">Signal</keyword>
<keyword id="KW-0865">Zymogen</keyword>
<organism>
    <name type="scientific">Aspergillus flavus (strain ATCC 200026 / FGSC A1120 / IAM 13836 / NRRL 3357 / JCM 12722 / SRRC 167)</name>
    <dbReference type="NCBI Taxonomy" id="332952"/>
    <lineage>
        <taxon>Eukaryota</taxon>
        <taxon>Fungi</taxon>
        <taxon>Dikarya</taxon>
        <taxon>Ascomycota</taxon>
        <taxon>Pezizomycotina</taxon>
        <taxon>Eurotiomycetes</taxon>
        <taxon>Eurotiomycetidae</taxon>
        <taxon>Eurotiales</taxon>
        <taxon>Aspergillaceae</taxon>
        <taxon>Aspergillus</taxon>
        <taxon>Aspergillus subgen. Circumdati</taxon>
    </lineage>
</organism>
<sequence length="404" mass="42313">MVILSKVAAVAVGLSTVASALPTGPSHSPHARRGFTINQITRQTARVGPKTASFPAIYSRALAKYGGTVPAHLKSAVASGHGTVVTSPEPNDIEYLTPVNIGGTTLNLDFDTGSADLWVFSEELPKSEQTGHDVYKPSGNASKIAGASWDISYGDGSSASGDVYQDTVTVGGVTAQGQAVEAASKISDQFVQDKNNDGLLGLAFSSINTVKPKPQTTFFDTVKDQLDAPLFAVTLKYHAPGSYDFGFIDKSKFTGELAYADVDDSQGFWQFTADGYSVGKGDAQKAPITGIADTGTTLVMLDDEIVDAYYKQVQGAKNDASAGGYVFPCETELPEFTVVIGSYNAVIPGKHINYAPLQEGSSTCVGGIQSNSGLGLSILGDVFLKSQYVVFDSQGPRLGFAAQA</sequence>
<proteinExistence type="inferred from homology"/>
<feature type="signal peptide" evidence="2">
    <location>
        <begin position="1"/>
        <end position="20"/>
    </location>
</feature>
<feature type="propeptide" id="PRO_0000407041" description="Activation peptide" evidence="1">
    <location>
        <begin position="21"/>
        <end position="77"/>
    </location>
</feature>
<feature type="chain" id="PRO_0000407042" description="Aspergillopepsin-1">
    <location>
        <begin position="78"/>
        <end position="404"/>
    </location>
</feature>
<feature type="domain" description="Peptidase A1" evidence="4">
    <location>
        <begin position="95"/>
        <end position="401"/>
    </location>
</feature>
<feature type="active site" evidence="4">
    <location>
        <position position="111"/>
    </location>
</feature>
<feature type="active site" evidence="4">
    <location>
        <position position="293"/>
    </location>
</feature>
<feature type="glycosylation site" description="N-linked (GlcNAc...) asparagine" evidence="3">
    <location>
        <position position="140"/>
    </location>
</feature>
<feature type="disulfide bond" evidence="4">
    <location>
        <begin position="329"/>
        <end position="364"/>
    </location>
</feature>
<protein>
    <recommendedName>
        <fullName evidence="5">Aspergillopepsin-1</fullName>
        <ecNumber evidence="1">3.4.23.18</ecNumber>
    </recommendedName>
    <alternativeName>
        <fullName>Aspartic protease pepA</fullName>
    </alternativeName>
    <alternativeName>
        <fullName>Aspergillopepsin I</fullName>
    </alternativeName>
    <alternativeName>
        <fullName>Aspergillopeptidase A</fullName>
    </alternativeName>
</protein>
<comment type="function">
    <text evidence="1">Secreted aspartic endopeptidase that allows assimilation of proteinaceous substrates. The scissile peptide bond is attacked by a nucleophilic water molecule activated by two aspartic residues in the active site. Shows a broad primary substrate specificity. Favors hydrophobic residues at the P1 and P1' positions, but also accepts a lysine residue in the P1 position, leading to the activation of trypsinogen and chymotrypsinogen A.</text>
</comment>
<comment type="catalytic activity">
    <reaction evidence="1">
        <text>Hydrolysis of proteins with broad specificity. Generally favors hydrophobic residues in P1 and P1', but also accepts Lys in P1, which leads to activation of trypsinogen. Does not clot milk.</text>
        <dbReference type="EC" id="3.4.23.18"/>
    </reaction>
</comment>
<comment type="subunit">
    <text evidence="1">Monomer.</text>
</comment>
<comment type="subcellular location">
    <subcellularLocation>
        <location evidence="1">Secreted</location>
    </subcellularLocation>
</comment>
<comment type="similarity">
    <text evidence="4">Belongs to the peptidase A1 family.</text>
</comment>
<reference key="1">
    <citation type="journal article" date="2015" name="Genome Announc.">
        <title>Genome sequence of Aspergillus flavus NRRL 3357, a strain that causes aflatoxin contamination of food and feed.</title>
        <authorList>
            <person name="Nierman W.C."/>
            <person name="Yu J."/>
            <person name="Fedorova-Abrams N.D."/>
            <person name="Losada L."/>
            <person name="Cleveland T.E."/>
            <person name="Bhatnagar D."/>
            <person name="Bennett J.W."/>
            <person name="Dean R."/>
            <person name="Payne G.A."/>
        </authorList>
    </citation>
    <scope>NUCLEOTIDE SEQUENCE [LARGE SCALE GENOMIC DNA]</scope>
    <source>
        <strain>ATCC 200026 / FGSC A1120 / IAM 13836 / NRRL 3357 / JCM 12722 / SRRC 167</strain>
    </source>
</reference>
<gene>
    <name type="primary">pepA</name>
    <name type="ORF">AFLA_094450</name>
</gene>